<sequence length="108" mass="12750">MVKFCPKCNNLMLPKDGKLKCAVCGYEEETTAEGSKEYEYKEHLENKKEKITVIESEGLETLPTTRIECPKCGHNEAYWWLQQTRCADEPETRFYKCKKCGHTWREYD</sequence>
<evidence type="ECO:0000250" key="1">
    <source>
        <dbReference type="UniProtKB" id="Q9P9I8"/>
    </source>
</evidence>
<evidence type="ECO:0000255" key="2"/>
<evidence type="ECO:0000255" key="3">
    <source>
        <dbReference type="PROSITE-ProRule" id="PRU00472"/>
    </source>
</evidence>
<evidence type="ECO:0000255" key="4">
    <source>
        <dbReference type="PROSITE-ProRule" id="PRU10145"/>
    </source>
</evidence>
<evidence type="ECO:0000305" key="5"/>
<reference key="1">
    <citation type="journal article" date="1996" name="Science">
        <title>Complete genome sequence of the methanogenic archaeon, Methanococcus jannaschii.</title>
        <authorList>
            <person name="Bult C.J."/>
            <person name="White O."/>
            <person name="Olsen G.J."/>
            <person name="Zhou L."/>
            <person name="Fleischmann R.D."/>
            <person name="Sutton G.G."/>
            <person name="Blake J.A."/>
            <person name="FitzGerald L.M."/>
            <person name="Clayton R.A."/>
            <person name="Gocayne J.D."/>
            <person name="Kerlavage A.R."/>
            <person name="Dougherty B.A."/>
            <person name="Tomb J.-F."/>
            <person name="Adams M.D."/>
            <person name="Reich C.I."/>
            <person name="Overbeek R."/>
            <person name="Kirkness E.F."/>
            <person name="Weinstock K.G."/>
            <person name="Merrick J.M."/>
            <person name="Glodek A."/>
            <person name="Scott J.L."/>
            <person name="Geoghagen N.S.M."/>
            <person name="Weidman J.F."/>
            <person name="Fuhrmann J.L."/>
            <person name="Nguyen D."/>
            <person name="Utterback T.R."/>
            <person name="Kelley J.M."/>
            <person name="Peterson J.D."/>
            <person name="Sadow P.W."/>
            <person name="Hanna M.C."/>
            <person name="Cotton M.D."/>
            <person name="Roberts K.M."/>
            <person name="Hurst M.A."/>
            <person name="Kaine B.P."/>
            <person name="Borodovsky M."/>
            <person name="Klenk H.-P."/>
            <person name="Fraser C.M."/>
            <person name="Smith H.O."/>
            <person name="Woese C.R."/>
            <person name="Venter J.C."/>
        </authorList>
    </citation>
    <scope>NUCLEOTIDE SEQUENCE [LARGE SCALE GENOMIC DNA]</scope>
    <source>
        <strain>ATCC 43067 / DSM 2661 / JAL-1 / JCM 10045 / NBRC 100440</strain>
    </source>
</reference>
<keyword id="KW-0238">DNA-binding</keyword>
<keyword id="KW-0240">DNA-directed RNA polymerase</keyword>
<keyword id="KW-0479">Metal-binding</keyword>
<keyword id="KW-1185">Reference proteome</keyword>
<keyword id="KW-0804">Transcription</keyword>
<keyword id="KW-0805">Transcription regulation</keyword>
<keyword id="KW-0862">Zinc</keyword>
<keyword id="KW-0863">Zinc-finger</keyword>
<gene>
    <name evidence="1" type="primary">tfs</name>
    <name type="ordered locus">MJ1148</name>
</gene>
<name>TFS_METJA</name>
<feature type="chain" id="PRO_0000121481" description="Transcription factor S">
    <location>
        <begin position="1"/>
        <end position="108"/>
    </location>
</feature>
<feature type="zinc finger region" description="C4-type" evidence="2">
    <location>
        <begin position="5"/>
        <end position="24"/>
    </location>
</feature>
<feature type="zinc finger region" description="TFIIS-type" evidence="3">
    <location>
        <begin position="65"/>
        <end position="105"/>
    </location>
</feature>
<feature type="binding site" evidence="4">
    <location>
        <position position="5"/>
    </location>
    <ligand>
        <name>Zn(2+)</name>
        <dbReference type="ChEBI" id="CHEBI:29105"/>
        <label>1</label>
    </ligand>
</feature>
<feature type="binding site" evidence="4">
    <location>
        <position position="8"/>
    </location>
    <ligand>
        <name>Zn(2+)</name>
        <dbReference type="ChEBI" id="CHEBI:29105"/>
        <label>1</label>
    </ligand>
</feature>
<feature type="binding site" evidence="4">
    <location>
        <position position="21"/>
    </location>
    <ligand>
        <name>Zn(2+)</name>
        <dbReference type="ChEBI" id="CHEBI:29105"/>
        <label>1</label>
    </ligand>
</feature>
<feature type="binding site" evidence="4">
    <location>
        <position position="24"/>
    </location>
    <ligand>
        <name>Zn(2+)</name>
        <dbReference type="ChEBI" id="CHEBI:29105"/>
        <label>1</label>
    </ligand>
</feature>
<feature type="binding site" evidence="3">
    <location>
        <position position="69"/>
    </location>
    <ligand>
        <name>Zn(2+)</name>
        <dbReference type="ChEBI" id="CHEBI:29105"/>
        <label>2</label>
    </ligand>
</feature>
<feature type="binding site" evidence="3">
    <location>
        <position position="72"/>
    </location>
    <ligand>
        <name>Zn(2+)</name>
        <dbReference type="ChEBI" id="CHEBI:29105"/>
        <label>2</label>
    </ligand>
</feature>
<feature type="binding site" evidence="3">
    <location>
        <position position="97"/>
    </location>
    <ligand>
        <name>Zn(2+)</name>
        <dbReference type="ChEBI" id="CHEBI:29105"/>
        <label>2</label>
    </ligand>
</feature>
<feature type="binding site" evidence="3">
    <location>
        <position position="100"/>
    </location>
    <ligand>
        <name>Zn(2+)</name>
        <dbReference type="ChEBI" id="CHEBI:29105"/>
        <label>2</label>
    </ligand>
</feature>
<accession>Q58548</accession>
<dbReference type="EMBL" id="L77117">
    <property type="protein sequence ID" value="AAB99148.1"/>
    <property type="molecule type" value="Genomic_DNA"/>
</dbReference>
<dbReference type="PIR" id="C64443">
    <property type="entry name" value="C64443"/>
</dbReference>
<dbReference type="RefSeq" id="WP_010870659.1">
    <property type="nucleotide sequence ID" value="NC_000909.1"/>
</dbReference>
<dbReference type="SMR" id="Q58548"/>
<dbReference type="FunCoup" id="Q58548">
    <property type="interactions" value="110"/>
</dbReference>
<dbReference type="STRING" id="243232.MJ_1148"/>
<dbReference type="PaxDb" id="243232-MJ_1148"/>
<dbReference type="EnsemblBacteria" id="AAB99148">
    <property type="protein sequence ID" value="AAB99148"/>
    <property type="gene ID" value="MJ_1148"/>
</dbReference>
<dbReference type="GeneID" id="1452044"/>
<dbReference type="KEGG" id="mja:MJ_1148"/>
<dbReference type="eggNOG" id="arCOG00579">
    <property type="taxonomic scope" value="Archaea"/>
</dbReference>
<dbReference type="HOGENOM" id="CLU_093932_3_2_2"/>
<dbReference type="InParanoid" id="Q58548"/>
<dbReference type="OrthoDB" id="72957at2157"/>
<dbReference type="PhylomeDB" id="Q58548"/>
<dbReference type="Proteomes" id="UP000000805">
    <property type="component" value="Chromosome"/>
</dbReference>
<dbReference type="GO" id="GO:0000428">
    <property type="term" value="C:DNA-directed RNA polymerase complex"/>
    <property type="evidence" value="ECO:0007669"/>
    <property type="project" value="UniProtKB-KW"/>
</dbReference>
<dbReference type="GO" id="GO:0003677">
    <property type="term" value="F:DNA binding"/>
    <property type="evidence" value="ECO:0007669"/>
    <property type="project" value="UniProtKB-KW"/>
</dbReference>
<dbReference type="GO" id="GO:0003899">
    <property type="term" value="F:DNA-directed RNA polymerase activity"/>
    <property type="evidence" value="ECO:0007669"/>
    <property type="project" value="InterPro"/>
</dbReference>
<dbReference type="GO" id="GO:0008270">
    <property type="term" value="F:zinc ion binding"/>
    <property type="evidence" value="ECO:0000250"/>
    <property type="project" value="UniProtKB"/>
</dbReference>
<dbReference type="GO" id="GO:0006351">
    <property type="term" value="P:DNA-templated transcription"/>
    <property type="evidence" value="ECO:0007669"/>
    <property type="project" value="InterPro"/>
</dbReference>
<dbReference type="GO" id="GO:0006355">
    <property type="term" value="P:regulation of DNA-templated transcription"/>
    <property type="evidence" value="ECO:0000250"/>
    <property type="project" value="UniProtKB"/>
</dbReference>
<dbReference type="CDD" id="cd10511">
    <property type="entry name" value="Zn-ribbon_TFS"/>
    <property type="match status" value="1"/>
</dbReference>
<dbReference type="FunFam" id="2.20.25.10:FF:000029">
    <property type="entry name" value="DNA-directed RNA polymerase subunit M"/>
    <property type="match status" value="1"/>
</dbReference>
<dbReference type="Gene3D" id="2.20.25.10">
    <property type="match status" value="1"/>
</dbReference>
<dbReference type="InterPro" id="IPR019761">
    <property type="entry name" value="DNA-dir_RNA_pol-M_15_CS"/>
</dbReference>
<dbReference type="InterPro" id="IPR012164">
    <property type="entry name" value="Rpa12/Rpb9/Rpc10/TFS"/>
</dbReference>
<dbReference type="InterPro" id="IPR006288">
    <property type="entry name" value="TFS"/>
</dbReference>
<dbReference type="InterPro" id="IPR001529">
    <property type="entry name" value="Zn_ribbon_RPB9"/>
</dbReference>
<dbReference type="InterPro" id="IPR001222">
    <property type="entry name" value="Znf_TFIIS"/>
</dbReference>
<dbReference type="NCBIfam" id="TIGR01384">
    <property type="entry name" value="TFS_arch"/>
    <property type="match status" value="1"/>
</dbReference>
<dbReference type="PANTHER" id="PTHR11239">
    <property type="entry name" value="DNA-DIRECTED RNA POLYMERASE"/>
    <property type="match status" value="1"/>
</dbReference>
<dbReference type="PANTHER" id="PTHR11239:SF12">
    <property type="entry name" value="DNA-DIRECTED RNA POLYMERASE III SUBUNIT RPC10"/>
    <property type="match status" value="1"/>
</dbReference>
<dbReference type="Pfam" id="PF02150">
    <property type="entry name" value="Zn_ribbon_RPB9"/>
    <property type="match status" value="1"/>
</dbReference>
<dbReference type="Pfam" id="PF01096">
    <property type="entry name" value="Zn_ribbon_TFIIS"/>
    <property type="match status" value="1"/>
</dbReference>
<dbReference type="PIRSF" id="PIRSF005586">
    <property type="entry name" value="RNApol_RpoM"/>
    <property type="match status" value="1"/>
</dbReference>
<dbReference type="SMART" id="SM00661">
    <property type="entry name" value="RPOL9"/>
    <property type="match status" value="1"/>
</dbReference>
<dbReference type="SMART" id="SM00440">
    <property type="entry name" value="ZnF_C2C2"/>
    <property type="match status" value="1"/>
</dbReference>
<dbReference type="SUPFAM" id="SSF57783">
    <property type="entry name" value="Zinc beta-ribbon"/>
    <property type="match status" value="2"/>
</dbReference>
<dbReference type="PROSITE" id="PS01030">
    <property type="entry name" value="RNA_POL_M_15KD"/>
    <property type="match status" value="1"/>
</dbReference>
<dbReference type="PROSITE" id="PS00466">
    <property type="entry name" value="ZF_TFIIS_1"/>
    <property type="match status" value="1"/>
</dbReference>
<dbReference type="PROSITE" id="PS51133">
    <property type="entry name" value="ZF_TFIIS_2"/>
    <property type="match status" value="1"/>
</dbReference>
<comment type="function">
    <text evidence="1">Induces RNA cleavage activity in the RNA polymerase. In its presence, the cleavage activity of the RNA polymerase truncates the RNA back to position +15 in a stepwise manner by releasing mainly dinucleotides from the 3'-end of the nascent RNA. The truncated RNAs are able to continue elongation. Involved in transcriptional proofreading and fidelity. Misincorporation of nucleotides during elongation of transcription leads to arrested elongation complexes which are rescued by TFS-promoted removal of a dinucleotide from the 3'-end. TFS is able to induce a cleavage resynthesis cycle in stalled elongation complexes (resulting from the next missing nucleotide or a reduced incorporation rate of a wrong nucleotide) preventing misincorporation and enabling proofreading in a post-incorporation manner. Pausing of elongation complexes is the main determinant of TFS-induced RNA cleavage.</text>
</comment>
<comment type="similarity">
    <text evidence="5">Belongs to the archaeal RpoM/eukaryotic RPA12/RPB9/RPC11 RNA polymerase family.</text>
</comment>
<comment type="caution">
    <text evidence="5">More similar by sequence similarity to the eukaryotic RNA polymerase subunits.</text>
</comment>
<protein>
    <recommendedName>
        <fullName evidence="1">Transcription factor S</fullName>
    </recommendedName>
    <alternativeName>
        <fullName evidence="1">Transcription elongation factor IIS/RNA polymerase subunit homolog</fullName>
        <shortName evidence="1">TFIIS/RPSU homolog</shortName>
    </alternativeName>
</protein>
<proteinExistence type="inferred from homology"/>
<organism>
    <name type="scientific">Methanocaldococcus jannaschii (strain ATCC 43067 / DSM 2661 / JAL-1 / JCM 10045 / NBRC 100440)</name>
    <name type="common">Methanococcus jannaschii</name>
    <dbReference type="NCBI Taxonomy" id="243232"/>
    <lineage>
        <taxon>Archaea</taxon>
        <taxon>Methanobacteriati</taxon>
        <taxon>Methanobacteriota</taxon>
        <taxon>Methanomada group</taxon>
        <taxon>Methanococci</taxon>
        <taxon>Methanococcales</taxon>
        <taxon>Methanocaldococcaceae</taxon>
        <taxon>Methanocaldococcus</taxon>
    </lineage>
</organism>